<accession>A8FD25</accession>
<feature type="chain" id="PRO_1000057441" description="Adenylyl-sulfate kinase">
    <location>
        <begin position="1"/>
        <end position="197"/>
    </location>
</feature>
<feature type="active site" description="Phosphoserine intermediate" evidence="1">
    <location>
        <position position="107"/>
    </location>
</feature>
<feature type="binding site" evidence="1">
    <location>
        <begin position="33"/>
        <end position="40"/>
    </location>
    <ligand>
        <name>ATP</name>
        <dbReference type="ChEBI" id="CHEBI:30616"/>
    </ligand>
</feature>
<reference key="1">
    <citation type="journal article" date="2007" name="PLoS ONE">
        <title>Paradoxical DNA repair and peroxide resistance gene conservation in Bacillus pumilus SAFR-032.</title>
        <authorList>
            <person name="Gioia J."/>
            <person name="Yerrapragada S."/>
            <person name="Qin X."/>
            <person name="Jiang H."/>
            <person name="Igboeli O.C."/>
            <person name="Muzny D."/>
            <person name="Dugan-Rocha S."/>
            <person name="Ding Y."/>
            <person name="Hawes A."/>
            <person name="Liu W."/>
            <person name="Perez L."/>
            <person name="Kovar C."/>
            <person name="Dinh H."/>
            <person name="Lee S."/>
            <person name="Nazareth L."/>
            <person name="Blyth P."/>
            <person name="Holder M."/>
            <person name="Buhay C."/>
            <person name="Tirumalai M.R."/>
            <person name="Liu Y."/>
            <person name="Dasgupta I."/>
            <person name="Bokhetache L."/>
            <person name="Fujita M."/>
            <person name="Karouia F."/>
            <person name="Eswara Moorthy P."/>
            <person name="Siefert J."/>
            <person name="Uzman A."/>
            <person name="Buzumbo P."/>
            <person name="Verma A."/>
            <person name="Zwiya H."/>
            <person name="McWilliams B.D."/>
            <person name="Olowu A."/>
            <person name="Clinkenbeard K.D."/>
            <person name="Newcombe D."/>
            <person name="Golebiewski L."/>
            <person name="Petrosino J.F."/>
            <person name="Nicholson W.L."/>
            <person name="Fox G.E."/>
            <person name="Venkateswaran K."/>
            <person name="Highlander S.K."/>
            <person name="Weinstock G.M."/>
        </authorList>
    </citation>
    <scope>NUCLEOTIDE SEQUENCE [LARGE SCALE GENOMIC DNA]</scope>
    <source>
        <strain>SAFR-032</strain>
    </source>
</reference>
<evidence type="ECO:0000255" key="1">
    <source>
        <dbReference type="HAMAP-Rule" id="MF_00065"/>
    </source>
</evidence>
<comment type="function">
    <text evidence="1">Catalyzes the synthesis of activated sulfate.</text>
</comment>
<comment type="catalytic activity">
    <reaction evidence="1">
        <text>adenosine 5'-phosphosulfate + ATP = 3'-phosphoadenylyl sulfate + ADP + H(+)</text>
        <dbReference type="Rhea" id="RHEA:24152"/>
        <dbReference type="ChEBI" id="CHEBI:15378"/>
        <dbReference type="ChEBI" id="CHEBI:30616"/>
        <dbReference type="ChEBI" id="CHEBI:58243"/>
        <dbReference type="ChEBI" id="CHEBI:58339"/>
        <dbReference type="ChEBI" id="CHEBI:456216"/>
        <dbReference type="EC" id="2.7.1.25"/>
    </reaction>
</comment>
<comment type="pathway">
    <text evidence="1">Sulfur metabolism; hydrogen sulfide biosynthesis; sulfite from sulfate: step 2/3.</text>
</comment>
<comment type="similarity">
    <text evidence="1">Belongs to the APS kinase family.</text>
</comment>
<gene>
    <name evidence="1" type="primary">cysC</name>
    <name type="ordered locus">BPUM_1459</name>
</gene>
<protein>
    <recommendedName>
        <fullName evidence="1">Adenylyl-sulfate kinase</fullName>
        <ecNumber evidence="1">2.7.1.25</ecNumber>
    </recommendedName>
    <alternativeName>
        <fullName evidence="1">APS kinase</fullName>
    </alternativeName>
    <alternativeName>
        <fullName evidence="1">ATP adenosine-5'-phosphosulfate 3'-phosphotransferase</fullName>
    </alternativeName>
    <alternativeName>
        <fullName evidence="1">Adenosine-5'-phosphosulfate kinase</fullName>
    </alternativeName>
</protein>
<organism>
    <name type="scientific">Bacillus pumilus (strain SAFR-032)</name>
    <dbReference type="NCBI Taxonomy" id="315750"/>
    <lineage>
        <taxon>Bacteria</taxon>
        <taxon>Bacillati</taxon>
        <taxon>Bacillota</taxon>
        <taxon>Bacilli</taxon>
        <taxon>Bacillales</taxon>
        <taxon>Bacillaceae</taxon>
        <taxon>Bacillus</taxon>
    </lineage>
</organism>
<keyword id="KW-0067">ATP-binding</keyword>
<keyword id="KW-0418">Kinase</keyword>
<keyword id="KW-0547">Nucleotide-binding</keyword>
<keyword id="KW-0597">Phosphoprotein</keyword>
<keyword id="KW-0808">Transferase</keyword>
<sequence>MSNEHIVWHDSSITKNEYQQKNNHKSGIIWLTGLSGSGKSTIANAAARELFEQGYQVTVLDGDNVRHGLNKDLGFSDDDRKENIRRIGEVAKLFVEQGTIVITAFISPFQEDRRIVRQLVEAGEFHEVFVKCDLNVCEERDPKGLYKKARNGEIPFFTGIDSPYEEPAAPELVLDTGELSREESKQRLVDYVKEKAK</sequence>
<dbReference type="EC" id="2.7.1.25" evidence="1"/>
<dbReference type="EMBL" id="CP000813">
    <property type="protein sequence ID" value="ABV62142.1"/>
    <property type="molecule type" value="Genomic_DNA"/>
</dbReference>
<dbReference type="RefSeq" id="WP_012009905.1">
    <property type="nucleotide sequence ID" value="NC_009848.4"/>
</dbReference>
<dbReference type="SMR" id="A8FD25"/>
<dbReference type="STRING" id="315750.BPUM_1459"/>
<dbReference type="GeneID" id="5620722"/>
<dbReference type="KEGG" id="bpu:BPUM_1459"/>
<dbReference type="eggNOG" id="COG0529">
    <property type="taxonomic scope" value="Bacteria"/>
</dbReference>
<dbReference type="HOGENOM" id="CLU_046932_1_0_9"/>
<dbReference type="OrthoDB" id="9804504at2"/>
<dbReference type="UniPathway" id="UPA00140">
    <property type="reaction ID" value="UER00205"/>
</dbReference>
<dbReference type="Proteomes" id="UP000001355">
    <property type="component" value="Chromosome"/>
</dbReference>
<dbReference type="GO" id="GO:0004020">
    <property type="term" value="F:adenylylsulfate kinase activity"/>
    <property type="evidence" value="ECO:0007669"/>
    <property type="project" value="UniProtKB-UniRule"/>
</dbReference>
<dbReference type="GO" id="GO:0005524">
    <property type="term" value="F:ATP binding"/>
    <property type="evidence" value="ECO:0007669"/>
    <property type="project" value="UniProtKB-UniRule"/>
</dbReference>
<dbReference type="GO" id="GO:0070814">
    <property type="term" value="P:hydrogen sulfide biosynthetic process"/>
    <property type="evidence" value="ECO:0007669"/>
    <property type="project" value="UniProtKB-UniRule"/>
</dbReference>
<dbReference type="GO" id="GO:0000103">
    <property type="term" value="P:sulfate assimilation"/>
    <property type="evidence" value="ECO:0007669"/>
    <property type="project" value="UniProtKB-UniRule"/>
</dbReference>
<dbReference type="CDD" id="cd02027">
    <property type="entry name" value="APSK"/>
    <property type="match status" value="1"/>
</dbReference>
<dbReference type="FunFam" id="3.40.50.300:FF:000212">
    <property type="entry name" value="Adenylyl-sulfate kinase"/>
    <property type="match status" value="1"/>
</dbReference>
<dbReference type="Gene3D" id="3.40.50.300">
    <property type="entry name" value="P-loop containing nucleotide triphosphate hydrolases"/>
    <property type="match status" value="1"/>
</dbReference>
<dbReference type="HAMAP" id="MF_00065">
    <property type="entry name" value="Adenylyl_sulf_kinase"/>
    <property type="match status" value="1"/>
</dbReference>
<dbReference type="InterPro" id="IPR002891">
    <property type="entry name" value="APS_kinase"/>
</dbReference>
<dbReference type="InterPro" id="IPR027417">
    <property type="entry name" value="P-loop_NTPase"/>
</dbReference>
<dbReference type="NCBIfam" id="TIGR00455">
    <property type="entry name" value="apsK"/>
    <property type="match status" value="1"/>
</dbReference>
<dbReference type="NCBIfam" id="NF003013">
    <property type="entry name" value="PRK03846.1"/>
    <property type="match status" value="1"/>
</dbReference>
<dbReference type="PANTHER" id="PTHR11055">
    <property type="entry name" value="BIFUNCTIONAL 3'-PHOSPHOADENOSINE 5'-PHOSPHOSULFATE SYNTHASE"/>
    <property type="match status" value="1"/>
</dbReference>
<dbReference type="PANTHER" id="PTHR11055:SF1">
    <property type="entry name" value="PAPS SYNTHETASE, ISOFORM D"/>
    <property type="match status" value="1"/>
</dbReference>
<dbReference type="Pfam" id="PF01583">
    <property type="entry name" value="APS_kinase"/>
    <property type="match status" value="1"/>
</dbReference>
<dbReference type="SUPFAM" id="SSF52540">
    <property type="entry name" value="P-loop containing nucleoside triphosphate hydrolases"/>
    <property type="match status" value="1"/>
</dbReference>
<proteinExistence type="inferred from homology"/>
<name>CYSC_BACP2</name>